<sequence length="191" mass="20162">MSLIRPALVLFILLTLLTGGVYPLLTTSLGQWWFNSQANGSLIRLNGEVRGSGLIGQNYTAAGYFQGRPSATAETADNPMASGGSNLAASNPALDKAVSERVQALRAANPDADPRVPVELVTTSASGLDNNLTPAAALWQVPRVAKARQLSVEQVSQLVNQATQTPLLSFLGQPVVNILQLNMALDALKDK</sequence>
<comment type="function">
    <text evidence="1">Part of the high-affinity ATP-driven potassium transport (or Kdp) system, which catalyzes the hydrolysis of ATP coupled with the electrogenic transport of potassium into the cytoplasm. This subunit acts as a catalytic chaperone that increases the ATP-binding affinity of the ATP-hydrolyzing subunit KdpB by the formation of a transient KdpB/KdpC/ATP ternary complex.</text>
</comment>
<comment type="subunit">
    <text evidence="1">The system is composed of three essential subunits: KdpA, KdpB and KdpC.</text>
</comment>
<comment type="subcellular location">
    <subcellularLocation>
        <location evidence="1">Cell inner membrane</location>
        <topology evidence="1">Single-pass membrane protein</topology>
    </subcellularLocation>
</comment>
<comment type="similarity">
    <text evidence="1">Belongs to the KdpC family.</text>
</comment>
<organism>
    <name type="scientific">Klebsiella pneumoniae (strain 342)</name>
    <dbReference type="NCBI Taxonomy" id="507522"/>
    <lineage>
        <taxon>Bacteria</taxon>
        <taxon>Pseudomonadati</taxon>
        <taxon>Pseudomonadota</taxon>
        <taxon>Gammaproteobacteria</taxon>
        <taxon>Enterobacterales</taxon>
        <taxon>Enterobacteriaceae</taxon>
        <taxon>Klebsiella/Raoultella group</taxon>
        <taxon>Klebsiella</taxon>
        <taxon>Klebsiella pneumoniae complex</taxon>
    </lineage>
</organism>
<proteinExistence type="inferred from homology"/>
<protein>
    <recommendedName>
        <fullName evidence="1">Potassium-transporting ATPase KdpC subunit</fullName>
    </recommendedName>
    <alternativeName>
        <fullName evidence="1">ATP phosphohydrolase [potassium-transporting] C chain</fullName>
    </alternativeName>
    <alternativeName>
        <fullName evidence="1">Potassium-binding and translocating subunit C</fullName>
    </alternativeName>
    <alternativeName>
        <fullName evidence="1">Potassium-translocating ATPase C chain</fullName>
    </alternativeName>
</protein>
<gene>
    <name evidence="1" type="primary">kdpC</name>
    <name type="ordered locus">KPK_3855</name>
</gene>
<name>KDPC_KLEP3</name>
<keyword id="KW-0067">ATP-binding</keyword>
<keyword id="KW-0997">Cell inner membrane</keyword>
<keyword id="KW-1003">Cell membrane</keyword>
<keyword id="KW-0406">Ion transport</keyword>
<keyword id="KW-0472">Membrane</keyword>
<keyword id="KW-0547">Nucleotide-binding</keyword>
<keyword id="KW-0630">Potassium</keyword>
<keyword id="KW-0633">Potassium transport</keyword>
<keyword id="KW-0812">Transmembrane</keyword>
<keyword id="KW-1133">Transmembrane helix</keyword>
<keyword id="KW-0813">Transport</keyword>
<reference key="1">
    <citation type="journal article" date="2008" name="PLoS Genet.">
        <title>Complete genome sequence of the N2-fixing broad host range endophyte Klebsiella pneumoniae 342 and virulence predictions verified in mice.</title>
        <authorList>
            <person name="Fouts D.E."/>
            <person name="Tyler H.L."/>
            <person name="DeBoy R.T."/>
            <person name="Daugherty S."/>
            <person name="Ren Q."/>
            <person name="Badger J.H."/>
            <person name="Durkin A.S."/>
            <person name="Huot H."/>
            <person name="Shrivastava S."/>
            <person name="Kothari S."/>
            <person name="Dodson R.J."/>
            <person name="Mohamoud Y."/>
            <person name="Khouri H."/>
            <person name="Roesch L.F.W."/>
            <person name="Krogfelt K.A."/>
            <person name="Struve C."/>
            <person name="Triplett E.W."/>
            <person name="Methe B.A."/>
        </authorList>
    </citation>
    <scope>NUCLEOTIDE SEQUENCE [LARGE SCALE GENOMIC DNA]</scope>
    <source>
        <strain>342</strain>
    </source>
</reference>
<dbReference type="EMBL" id="CP000964">
    <property type="protein sequence ID" value="ACI07587.1"/>
    <property type="molecule type" value="Genomic_DNA"/>
</dbReference>
<dbReference type="SMR" id="B5XZF0"/>
<dbReference type="KEGG" id="kpe:KPK_3855"/>
<dbReference type="HOGENOM" id="CLU_077094_2_0_6"/>
<dbReference type="Proteomes" id="UP000001734">
    <property type="component" value="Chromosome"/>
</dbReference>
<dbReference type="GO" id="GO:0005886">
    <property type="term" value="C:plasma membrane"/>
    <property type="evidence" value="ECO:0007669"/>
    <property type="project" value="UniProtKB-SubCell"/>
</dbReference>
<dbReference type="GO" id="GO:0005524">
    <property type="term" value="F:ATP binding"/>
    <property type="evidence" value="ECO:0007669"/>
    <property type="project" value="UniProtKB-UniRule"/>
</dbReference>
<dbReference type="GO" id="GO:0008556">
    <property type="term" value="F:P-type potassium transmembrane transporter activity"/>
    <property type="evidence" value="ECO:0007669"/>
    <property type="project" value="InterPro"/>
</dbReference>
<dbReference type="HAMAP" id="MF_00276">
    <property type="entry name" value="KdpC"/>
    <property type="match status" value="1"/>
</dbReference>
<dbReference type="InterPro" id="IPR003820">
    <property type="entry name" value="KdpC"/>
</dbReference>
<dbReference type="NCBIfam" id="TIGR00681">
    <property type="entry name" value="kdpC"/>
    <property type="match status" value="1"/>
</dbReference>
<dbReference type="NCBIfam" id="NF001454">
    <property type="entry name" value="PRK00315.1"/>
    <property type="match status" value="1"/>
</dbReference>
<dbReference type="PANTHER" id="PTHR30042">
    <property type="entry name" value="POTASSIUM-TRANSPORTING ATPASE C CHAIN"/>
    <property type="match status" value="1"/>
</dbReference>
<dbReference type="PANTHER" id="PTHR30042:SF2">
    <property type="entry name" value="POTASSIUM-TRANSPORTING ATPASE KDPC SUBUNIT"/>
    <property type="match status" value="1"/>
</dbReference>
<dbReference type="Pfam" id="PF02669">
    <property type="entry name" value="KdpC"/>
    <property type="match status" value="1"/>
</dbReference>
<dbReference type="PIRSF" id="PIRSF001296">
    <property type="entry name" value="K_ATPase_KdpC"/>
    <property type="match status" value="1"/>
</dbReference>
<accession>B5XZF0</accession>
<feature type="chain" id="PRO_1000114728" description="Potassium-transporting ATPase KdpC subunit">
    <location>
        <begin position="1"/>
        <end position="191"/>
    </location>
</feature>
<feature type="transmembrane region" description="Helical" evidence="1">
    <location>
        <begin position="6"/>
        <end position="26"/>
    </location>
</feature>
<evidence type="ECO:0000255" key="1">
    <source>
        <dbReference type="HAMAP-Rule" id="MF_00276"/>
    </source>
</evidence>